<gene>
    <name type="primary">npl4</name>
    <name type="ORF">ACLA_031600</name>
</gene>
<protein>
    <recommendedName>
        <fullName>Nuclear protein localization protein 4</fullName>
    </recommendedName>
</protein>
<dbReference type="EMBL" id="DS027059">
    <property type="protein sequence ID" value="EAW08427.1"/>
    <property type="molecule type" value="Genomic_DNA"/>
</dbReference>
<dbReference type="RefSeq" id="XP_001269853.1">
    <property type="nucleotide sequence ID" value="XM_001269852.1"/>
</dbReference>
<dbReference type="SMR" id="A1CS06"/>
<dbReference type="STRING" id="344612.A1CS06"/>
<dbReference type="EnsemblFungi" id="EAW08427">
    <property type="protein sequence ID" value="EAW08427"/>
    <property type="gene ID" value="ACLA_031600"/>
</dbReference>
<dbReference type="GeneID" id="4701402"/>
<dbReference type="KEGG" id="act:ACLA_031600"/>
<dbReference type="VEuPathDB" id="FungiDB:ACLA_031600"/>
<dbReference type="eggNOG" id="KOG2834">
    <property type="taxonomic scope" value="Eukaryota"/>
</dbReference>
<dbReference type="HOGENOM" id="CLU_017172_0_0_1"/>
<dbReference type="OMA" id="KWSRTGR"/>
<dbReference type="OrthoDB" id="10251089at2759"/>
<dbReference type="Proteomes" id="UP000006701">
    <property type="component" value="Unassembled WGS sequence"/>
</dbReference>
<dbReference type="GO" id="GO:0005789">
    <property type="term" value="C:endoplasmic reticulum membrane"/>
    <property type="evidence" value="ECO:0007669"/>
    <property type="project" value="UniProtKB-SubCell"/>
</dbReference>
<dbReference type="GO" id="GO:0031965">
    <property type="term" value="C:nuclear membrane"/>
    <property type="evidence" value="ECO:0007669"/>
    <property type="project" value="UniProtKB-SubCell"/>
</dbReference>
<dbReference type="GO" id="GO:0048471">
    <property type="term" value="C:perinuclear region of cytoplasm"/>
    <property type="evidence" value="ECO:0007669"/>
    <property type="project" value="UniProtKB-SubCell"/>
</dbReference>
<dbReference type="GO" id="GO:0043130">
    <property type="term" value="F:ubiquitin binding"/>
    <property type="evidence" value="ECO:0007669"/>
    <property type="project" value="TreeGrafter"/>
</dbReference>
<dbReference type="GO" id="GO:0031625">
    <property type="term" value="F:ubiquitin protein ligase binding"/>
    <property type="evidence" value="ECO:0007669"/>
    <property type="project" value="TreeGrafter"/>
</dbReference>
<dbReference type="GO" id="GO:0051028">
    <property type="term" value="P:mRNA transport"/>
    <property type="evidence" value="ECO:0007669"/>
    <property type="project" value="UniProtKB-KW"/>
</dbReference>
<dbReference type="GO" id="GO:0015031">
    <property type="term" value="P:protein transport"/>
    <property type="evidence" value="ECO:0007669"/>
    <property type="project" value="UniProtKB-KW"/>
</dbReference>
<dbReference type="GO" id="GO:0006511">
    <property type="term" value="P:ubiquitin-dependent protein catabolic process"/>
    <property type="evidence" value="ECO:0007669"/>
    <property type="project" value="InterPro"/>
</dbReference>
<dbReference type="CDD" id="cd08061">
    <property type="entry name" value="MPN_NPL4"/>
    <property type="match status" value="1"/>
</dbReference>
<dbReference type="FunFam" id="3.10.20.90:FF:000344">
    <property type="entry name" value="Nuclear protein localization protein 4"/>
    <property type="match status" value="1"/>
</dbReference>
<dbReference type="Gene3D" id="3.10.20.90">
    <property type="entry name" value="Phosphatidylinositol 3-kinase Catalytic Subunit, Chain A, domain 1"/>
    <property type="match status" value="1"/>
</dbReference>
<dbReference type="InterPro" id="IPR037518">
    <property type="entry name" value="MPN"/>
</dbReference>
<dbReference type="InterPro" id="IPR016563">
    <property type="entry name" value="Npl4"/>
</dbReference>
<dbReference type="InterPro" id="IPR007717">
    <property type="entry name" value="NPL4_C"/>
</dbReference>
<dbReference type="InterPro" id="IPR007716">
    <property type="entry name" value="NPL4_Zn-bd_put"/>
</dbReference>
<dbReference type="InterPro" id="IPR029071">
    <property type="entry name" value="Ubiquitin-like_domsf"/>
</dbReference>
<dbReference type="PANTHER" id="PTHR12710">
    <property type="entry name" value="NUCLEAR PROTEIN LOCALIZATION 4"/>
    <property type="match status" value="1"/>
</dbReference>
<dbReference type="PANTHER" id="PTHR12710:SF0">
    <property type="entry name" value="NUCLEAR PROTEIN LOCALIZATION PROTEIN 4 HOMOLOG"/>
    <property type="match status" value="1"/>
</dbReference>
<dbReference type="Pfam" id="PF05021">
    <property type="entry name" value="NPL4"/>
    <property type="match status" value="1"/>
</dbReference>
<dbReference type="Pfam" id="PF05020">
    <property type="entry name" value="zf-NPL4"/>
    <property type="match status" value="1"/>
</dbReference>
<dbReference type="PIRSF" id="PIRSF010052">
    <property type="entry name" value="Polyub_prc_Npl4"/>
    <property type="match status" value="1"/>
</dbReference>
<dbReference type="SUPFAM" id="SSF54236">
    <property type="entry name" value="Ubiquitin-like"/>
    <property type="match status" value="1"/>
</dbReference>
<dbReference type="PROSITE" id="PS50249">
    <property type="entry name" value="MPN"/>
    <property type="match status" value="1"/>
</dbReference>
<comment type="function">
    <text evidence="1">Involved in the import of nuclear-targeted proteins into the nucleus and the export of poly(A) RNA out of the nucleus. Has a role in the endoplasmic reticulum-associated degradation (ERAD) pathway (By similarity).</text>
</comment>
<comment type="subcellular location">
    <subcellularLocation>
        <location evidence="1">Cytoplasm</location>
        <location evidence="1">Perinuclear region</location>
    </subcellularLocation>
    <subcellularLocation>
        <location evidence="1">Endoplasmic reticulum membrane</location>
        <topology evidence="1">Peripheral membrane protein</topology>
        <orientation evidence="1">Cytoplasmic side</orientation>
    </subcellularLocation>
    <subcellularLocation>
        <location evidence="1">Nucleus membrane</location>
        <topology evidence="1">Peripheral membrane protein</topology>
        <orientation evidence="1">Cytoplasmic side</orientation>
    </subcellularLocation>
    <text evidence="1">Localizes mainly at the nuclear periphery and the endoplasmic reticulum membrane.</text>
</comment>
<comment type="similarity">
    <text evidence="4">Belongs to the NPL4 family.</text>
</comment>
<proteinExistence type="inferred from homology"/>
<sequence>MAATRPIILRFESRNGQFRLSVSPQELFPTLKQKILENLPKDVEPSSITLSNKPIGTGGEERSLDGLEGVSIEQVGLKHGDKLFVGYQERKGGETTPAKAHAAADSLRRLNGALVPQTETVTFRPPTSSSATVKNPWEVVQQSPLDDKLDKKDGKIQRPRDMKMCKHGPKGMCDYCMPLEPYDPKYLAEKKIKHLSFHSYMRKINAATNKAELKSSFMPPLSEPYYRVRHDCPSGHPPWPEGICTKCQPSAISLQPQEFRMVDHVEFSSPDLINSLLDFWRKSGSQRLGFLYGTYEEYTEVPLGVKAVVQAIYEPPQVDEVDGVTLHEWPNEKEVDEVARLCGLEKVGVIFTDLLDAGRGDGSVVCKRHIDSYYLSSLEIAFASRLQAQYPKTTKWSRTGRFGSNFVTCVLSGDEEGAITISSYQASVSAVEMVRADIVEPSAEPSVMLVQSEDDDSDNKSRYIPEVFYRKINEYGVSAQQNAKPSFPVEFLLVTLTHGFPTESNPLFTKSTFPIENREVIGESQDLRSVAKKLVSHRDSNEVIPEVSDFHLLCYLHSLSTFSKTNANRLHSKITRTVTTNLMTPQDEEKLLCRVATSHDPTEGLKLINTPGWATLVTILQESGERPPKRPWLNPADPPRPLSQQGKRHLSSRPESPKSESEQLAKRFKGASLE</sequence>
<reference key="1">
    <citation type="journal article" date="2008" name="PLoS Genet.">
        <title>Genomic islands in the pathogenic filamentous fungus Aspergillus fumigatus.</title>
        <authorList>
            <person name="Fedorova N.D."/>
            <person name="Khaldi N."/>
            <person name="Joardar V.S."/>
            <person name="Maiti R."/>
            <person name="Amedeo P."/>
            <person name="Anderson M.J."/>
            <person name="Crabtree J."/>
            <person name="Silva J.C."/>
            <person name="Badger J.H."/>
            <person name="Albarraq A."/>
            <person name="Angiuoli S."/>
            <person name="Bussey H."/>
            <person name="Bowyer P."/>
            <person name="Cotty P.J."/>
            <person name="Dyer P.S."/>
            <person name="Egan A."/>
            <person name="Galens K."/>
            <person name="Fraser-Liggett C.M."/>
            <person name="Haas B.J."/>
            <person name="Inman J.M."/>
            <person name="Kent R."/>
            <person name="Lemieux S."/>
            <person name="Malavazi I."/>
            <person name="Orvis J."/>
            <person name="Roemer T."/>
            <person name="Ronning C.M."/>
            <person name="Sundaram J.P."/>
            <person name="Sutton G."/>
            <person name="Turner G."/>
            <person name="Venter J.C."/>
            <person name="White O.R."/>
            <person name="Whitty B.R."/>
            <person name="Youngman P."/>
            <person name="Wolfe K.H."/>
            <person name="Goldman G.H."/>
            <person name="Wortman J.R."/>
            <person name="Jiang B."/>
            <person name="Denning D.W."/>
            <person name="Nierman W.C."/>
        </authorList>
    </citation>
    <scope>NUCLEOTIDE SEQUENCE [LARGE SCALE GENOMIC DNA]</scope>
    <source>
        <strain>ATCC 1007 / CBS 513.65 / DSM 816 / NCTC 3887 / NRRL 1 / QM 1276 / 107</strain>
    </source>
</reference>
<accession>A1CS06</accession>
<name>NPL4_ASPCL</name>
<keyword id="KW-0963">Cytoplasm</keyword>
<keyword id="KW-0256">Endoplasmic reticulum</keyword>
<keyword id="KW-0472">Membrane</keyword>
<keyword id="KW-0509">mRNA transport</keyword>
<keyword id="KW-0539">Nucleus</keyword>
<keyword id="KW-0653">Protein transport</keyword>
<keyword id="KW-1185">Reference proteome</keyword>
<keyword id="KW-0811">Translocation</keyword>
<keyword id="KW-0813">Transport</keyword>
<organism>
    <name type="scientific">Aspergillus clavatus (strain ATCC 1007 / CBS 513.65 / DSM 816 / NCTC 3887 / NRRL 1 / QM 1276 / 107)</name>
    <dbReference type="NCBI Taxonomy" id="344612"/>
    <lineage>
        <taxon>Eukaryota</taxon>
        <taxon>Fungi</taxon>
        <taxon>Dikarya</taxon>
        <taxon>Ascomycota</taxon>
        <taxon>Pezizomycotina</taxon>
        <taxon>Eurotiomycetes</taxon>
        <taxon>Eurotiomycetidae</taxon>
        <taxon>Eurotiales</taxon>
        <taxon>Aspergillaceae</taxon>
        <taxon>Aspergillus</taxon>
        <taxon>Aspergillus subgen. Fumigati</taxon>
    </lineage>
</organism>
<evidence type="ECO:0000250" key="1"/>
<evidence type="ECO:0000255" key="2">
    <source>
        <dbReference type="PROSITE-ProRule" id="PRU01182"/>
    </source>
</evidence>
<evidence type="ECO:0000256" key="3">
    <source>
        <dbReference type="SAM" id="MobiDB-lite"/>
    </source>
</evidence>
<evidence type="ECO:0000305" key="4"/>
<feature type="chain" id="PRO_0000339433" description="Nuclear protein localization protein 4">
    <location>
        <begin position="1"/>
        <end position="674"/>
    </location>
</feature>
<feature type="domain" description="MPN" evidence="2">
    <location>
        <begin position="265"/>
        <end position="402"/>
    </location>
</feature>
<feature type="region of interest" description="Disordered" evidence="3">
    <location>
        <begin position="623"/>
        <end position="674"/>
    </location>
</feature>
<feature type="compositionally biased region" description="Basic and acidic residues" evidence="3">
    <location>
        <begin position="655"/>
        <end position="665"/>
    </location>
</feature>